<feature type="chain" id="PRO_0000295359" description="PAN2-PAN3 deadenylation complex subunit PAN3">
    <location>
        <begin position="1"/>
        <end position="664"/>
    </location>
</feature>
<feature type="zinc finger region" description="C3H1-type" evidence="1">
    <location>
        <begin position="27"/>
        <end position="56"/>
    </location>
</feature>
<feature type="region of interest" description="Disordered" evidence="2">
    <location>
        <begin position="1"/>
        <end position="27"/>
    </location>
</feature>
<feature type="region of interest" description="Disordered" evidence="2">
    <location>
        <begin position="54"/>
        <end position="134"/>
    </location>
</feature>
<feature type="region of interest" description="Pseudokinase domain" evidence="1">
    <location>
        <begin position="265"/>
        <end position="525"/>
    </location>
</feature>
<feature type="region of interest" description="Knob domain" evidence="1">
    <location>
        <begin position="565"/>
        <end position="664"/>
    </location>
</feature>
<feature type="coiled-coil region" evidence="1">
    <location>
        <begin position="526"/>
        <end position="564"/>
    </location>
</feature>
<feature type="compositionally biased region" description="Polar residues" evidence="2">
    <location>
        <begin position="74"/>
        <end position="96"/>
    </location>
</feature>
<feature type="compositionally biased region" description="Low complexity" evidence="2">
    <location>
        <begin position="115"/>
        <end position="131"/>
    </location>
</feature>
<feature type="binding site" evidence="1">
    <location>
        <position position="317"/>
    </location>
    <ligand>
        <name>ATP</name>
        <dbReference type="ChEBI" id="CHEBI:30616"/>
    </ligand>
</feature>
<feature type="binding site" evidence="1">
    <location>
        <begin position="366"/>
        <end position="373"/>
    </location>
    <ligand>
        <name>ATP</name>
        <dbReference type="ChEBI" id="CHEBI:30616"/>
    </ligand>
</feature>
<feature type="binding site" evidence="1">
    <location>
        <begin position="425"/>
        <end position="426"/>
    </location>
    <ligand>
        <name>ATP</name>
        <dbReference type="ChEBI" id="CHEBI:30616"/>
    </ligand>
</feature>
<comment type="function">
    <text evidence="1">Regulatory subunit of the poly(A)-nuclease (PAN) deadenylation complex, one of two cytoplasmic mRNA deadenylases involved in mRNA turnover. PAN specifically shortens poly(A) tails of RNA and the activity is stimulated by poly(A)-binding protein pab1. PAN deadenylation is followed by rapid degradation of the shortened mRNA tails by the CCR4-NOT complex. Deadenylated mRNAs are then degraded by two alternative mechanisms, namely exosome-mediated 3'-5' exonucleolytic degradation, or deadenylation-dependent mRNA decaping and subsequent 5'-3' exonucleolytic degradation by xrn1. May also be involved in post-transcriptional maturation of mRNA poly(A) tails. pan3 acts as a positive regulator for PAN activity, recruiting the catalytic subunit pan2 to mRNA via its interaction with RNA and with pab1.</text>
</comment>
<comment type="subunit">
    <text evidence="1">Homodimer. Forms a heterotrimer with a catalytic subunit pan2 to form the poly(A)-nuclease (PAN) deadenylation complex. Interacts (via PAM-2 motif) with poly(A)-binding protein pab1 (via PABC domain), conferring substrate specificity of the enzyme complex.</text>
</comment>
<comment type="subcellular location">
    <subcellularLocation>
        <location evidence="1">Cytoplasm</location>
    </subcellularLocation>
</comment>
<comment type="domain">
    <text evidence="1">The N-terminal zinc finger binds to poly(A) RNA.</text>
</comment>
<comment type="domain">
    <text evidence="1">Contains a pseudokinase domain. The protein kinase domain is predicted to be catalytically inactive because some of the residues important for catalytic activity are substituted and it lacks the equivalent of the binding site for a peptide substrate. However, it has retained an ATP-binding site and ATP-binding is required for mRNA degradation, stimulating the activity of the pan2 nuclease in vitro. The nucleotide-binding site is juxtaposed to the RNase active site of pan2 in the complex and may actually bind nucleosides of a poly(A) RNA rather than ATP, feeding the poly(A)-tail to the active site of the deadenylase and thus increasing the efficiency with which this distributive enzyme degrades oligo(A) RNAs.</text>
</comment>
<comment type="domain">
    <text evidence="1">The pseudokinase domain, the coiled-coil (CC), and C-terminal knob domain (CK) form a structural unit (PKC) that forms an extensive high-affinity interaction surface for pan2.</text>
</comment>
<comment type="similarity">
    <text evidence="1">Belongs to the protein kinase superfamily. PAN3 family.</text>
</comment>
<comment type="sequence caution" evidence="3">
    <conflict type="erroneous gene model prediction">
        <sequence resource="EMBL-CDS" id="CAK37287"/>
    </conflict>
</comment>
<proteinExistence type="inferred from homology"/>
<reference key="1">
    <citation type="journal article" date="2007" name="Nat. Biotechnol.">
        <title>Genome sequencing and analysis of the versatile cell factory Aspergillus niger CBS 513.88.</title>
        <authorList>
            <person name="Pel H.J."/>
            <person name="de Winde J.H."/>
            <person name="Archer D.B."/>
            <person name="Dyer P.S."/>
            <person name="Hofmann G."/>
            <person name="Schaap P.J."/>
            <person name="Turner G."/>
            <person name="de Vries R.P."/>
            <person name="Albang R."/>
            <person name="Albermann K."/>
            <person name="Andersen M.R."/>
            <person name="Bendtsen J.D."/>
            <person name="Benen J.A.E."/>
            <person name="van den Berg M."/>
            <person name="Breestraat S."/>
            <person name="Caddick M.X."/>
            <person name="Contreras R."/>
            <person name="Cornell M."/>
            <person name="Coutinho P.M."/>
            <person name="Danchin E.G.J."/>
            <person name="Debets A.J.M."/>
            <person name="Dekker P."/>
            <person name="van Dijck P.W.M."/>
            <person name="van Dijk A."/>
            <person name="Dijkhuizen L."/>
            <person name="Driessen A.J.M."/>
            <person name="d'Enfert C."/>
            <person name="Geysens S."/>
            <person name="Goosen C."/>
            <person name="Groot G.S.P."/>
            <person name="de Groot P.W.J."/>
            <person name="Guillemette T."/>
            <person name="Henrissat B."/>
            <person name="Herweijer M."/>
            <person name="van den Hombergh J.P.T.W."/>
            <person name="van den Hondel C.A.M.J.J."/>
            <person name="van der Heijden R.T.J.M."/>
            <person name="van der Kaaij R.M."/>
            <person name="Klis F.M."/>
            <person name="Kools H.J."/>
            <person name="Kubicek C.P."/>
            <person name="van Kuyk P.A."/>
            <person name="Lauber J."/>
            <person name="Lu X."/>
            <person name="van der Maarel M.J.E.C."/>
            <person name="Meulenberg R."/>
            <person name="Menke H."/>
            <person name="Mortimer M.A."/>
            <person name="Nielsen J."/>
            <person name="Oliver S.G."/>
            <person name="Olsthoorn M."/>
            <person name="Pal K."/>
            <person name="van Peij N.N.M.E."/>
            <person name="Ram A.F.J."/>
            <person name="Rinas U."/>
            <person name="Roubos J.A."/>
            <person name="Sagt C.M.J."/>
            <person name="Schmoll M."/>
            <person name="Sun J."/>
            <person name="Ussery D."/>
            <person name="Varga J."/>
            <person name="Vervecken W."/>
            <person name="van de Vondervoort P.J.J."/>
            <person name="Wedler H."/>
            <person name="Woesten H.A.B."/>
            <person name="Zeng A.-P."/>
            <person name="van Ooyen A.J.J."/>
            <person name="Visser J."/>
            <person name="Stam H."/>
        </authorList>
    </citation>
    <scope>NUCLEOTIDE SEQUENCE [LARGE SCALE GENOMIC DNA]</scope>
    <source>
        <strain>ATCC MYA-4892 / CBS 513.88 / FGSC A1513</strain>
    </source>
</reference>
<accession>A2QAQ3</accession>
<name>PAN3_ASPNC</name>
<organism>
    <name type="scientific">Aspergillus niger (strain ATCC MYA-4892 / CBS 513.88 / FGSC A1513)</name>
    <dbReference type="NCBI Taxonomy" id="425011"/>
    <lineage>
        <taxon>Eukaryota</taxon>
        <taxon>Fungi</taxon>
        <taxon>Dikarya</taxon>
        <taxon>Ascomycota</taxon>
        <taxon>Pezizomycotina</taxon>
        <taxon>Eurotiomycetes</taxon>
        <taxon>Eurotiomycetidae</taxon>
        <taxon>Eurotiales</taxon>
        <taxon>Aspergillaceae</taxon>
        <taxon>Aspergillus</taxon>
        <taxon>Aspergillus subgen. Circumdati</taxon>
    </lineage>
</organism>
<sequence length="664" mass="73781">MATTGKSATLEDARHGTGSPKMKGRENAKDTLCRNVTIYGRCRYEDKGCAFNHDPHKVNSGYQSDSNKKRLNVDSPSFTPSILSSNGSSPTSQSATMKKMATISPKAASAAPFQPRSISSRSNSSTPTTRPGTMTPDWSVAEVQEFVPQGFDTAHIGSLQGNGTAGVPSTSAFDPFVTAPNPLSAANAVGPVQANPFSHDTAAALNGAAFFANQSGFQQPVQYHMYAPIGPHSQNTLGYQRNVHDLFLPNDLREEMQKKAAATLQTLPNTQLPAQVDYFHSLVPLDLNHQKNATIFGFPSWVYKAQSSKDGNFYALRRLEGFRLTNEKAIRSVQAWKRVCNGSVVTVHDAFTSRSFQDSSLIFVTDYHPLSKTLAEQHLGAGNRFQGRHNTHIPEQVLWGYMTQIANALKAIHASQLAARIIDPSKILLTGRNRIRLNACAIMDVVQFDTQRSLAELQRQDLVNFGQLIVTLGANQPNVMHNPTKAMEHFTRAYTAQLKNSVFWLLNGLQKDQERNIDIFITGISSTLMSTFDSALHLDDQLTSDLSRELENGRLVRLMTKLNFVNERPEYEHDRQWSENGERYFLKIFRDYVFHQVDAQGDPVVDLGHVLMCLNKLDAGTDEKITLISRDEQSCFVVSYKELKKALESSFQALLKPSASRRLH</sequence>
<evidence type="ECO:0000255" key="1">
    <source>
        <dbReference type="HAMAP-Rule" id="MF_03181"/>
    </source>
</evidence>
<evidence type="ECO:0000256" key="2">
    <source>
        <dbReference type="SAM" id="MobiDB-lite"/>
    </source>
</evidence>
<evidence type="ECO:0000305" key="3"/>
<keyword id="KW-0067">ATP-binding</keyword>
<keyword id="KW-0175">Coiled coil</keyword>
<keyword id="KW-0963">Cytoplasm</keyword>
<keyword id="KW-0479">Metal-binding</keyword>
<keyword id="KW-0507">mRNA processing</keyword>
<keyword id="KW-0547">Nucleotide-binding</keyword>
<keyword id="KW-1185">Reference proteome</keyword>
<keyword id="KW-0862">Zinc</keyword>
<keyword id="KW-0863">Zinc-finger</keyword>
<dbReference type="EMBL" id="AM269983">
    <property type="protein sequence ID" value="CAK37287.1"/>
    <property type="status" value="ALT_SEQ"/>
    <property type="molecule type" value="Genomic_DNA"/>
</dbReference>
<dbReference type="RefSeq" id="XP_001389642.2">
    <property type="nucleotide sequence ID" value="XM_001389605.2"/>
</dbReference>
<dbReference type="SMR" id="A2QAQ3"/>
<dbReference type="EnsemblFungi" id="CAK37287">
    <property type="protein sequence ID" value="CAK37287"/>
    <property type="gene ID" value="An01g12360"/>
</dbReference>
<dbReference type="GeneID" id="4977167"/>
<dbReference type="KEGG" id="ang:An01g12360"/>
<dbReference type="Proteomes" id="UP000006706">
    <property type="component" value="Chromosome 2R"/>
</dbReference>
<dbReference type="GO" id="GO:0000932">
    <property type="term" value="C:P-body"/>
    <property type="evidence" value="ECO:0007669"/>
    <property type="project" value="TreeGrafter"/>
</dbReference>
<dbReference type="GO" id="GO:0031251">
    <property type="term" value="C:PAN complex"/>
    <property type="evidence" value="ECO:0007669"/>
    <property type="project" value="UniProtKB-UniRule"/>
</dbReference>
<dbReference type="GO" id="GO:0005524">
    <property type="term" value="F:ATP binding"/>
    <property type="evidence" value="ECO:0007669"/>
    <property type="project" value="UniProtKB-UniRule"/>
</dbReference>
<dbReference type="GO" id="GO:0008143">
    <property type="term" value="F:poly(A) binding"/>
    <property type="evidence" value="ECO:0007669"/>
    <property type="project" value="TreeGrafter"/>
</dbReference>
<dbReference type="GO" id="GO:0004672">
    <property type="term" value="F:protein kinase activity"/>
    <property type="evidence" value="ECO:0007669"/>
    <property type="project" value="InterPro"/>
</dbReference>
<dbReference type="GO" id="GO:0008270">
    <property type="term" value="F:zinc ion binding"/>
    <property type="evidence" value="ECO:0007669"/>
    <property type="project" value="UniProtKB-KW"/>
</dbReference>
<dbReference type="GO" id="GO:0006397">
    <property type="term" value="P:mRNA processing"/>
    <property type="evidence" value="ECO:0007669"/>
    <property type="project" value="UniProtKB-KW"/>
</dbReference>
<dbReference type="GO" id="GO:0000289">
    <property type="term" value="P:nuclear-transcribed mRNA poly(A) tail shortening"/>
    <property type="evidence" value="ECO:0007669"/>
    <property type="project" value="UniProtKB-UniRule"/>
</dbReference>
<dbReference type="FunFam" id="1.10.287.3700:FF:000001">
    <property type="entry name" value="PAN2-PAN3 deadenylation complex subunit PAN3"/>
    <property type="match status" value="1"/>
</dbReference>
<dbReference type="FunFam" id="1.10.510.10:FF:000520">
    <property type="entry name" value="PAN2-PAN3 deadenylation complex subunit PAN3"/>
    <property type="match status" value="1"/>
</dbReference>
<dbReference type="FunFam" id="1.20.5.5160:FF:000002">
    <property type="entry name" value="PAN2-PAN3 deadenylation complex subunit PAN3"/>
    <property type="match status" value="1"/>
</dbReference>
<dbReference type="Gene3D" id="1.10.287.3700">
    <property type="match status" value="1"/>
</dbReference>
<dbReference type="Gene3D" id="1.20.5.5160">
    <property type="match status" value="1"/>
</dbReference>
<dbReference type="Gene3D" id="6.10.250.3160">
    <property type="match status" value="1"/>
</dbReference>
<dbReference type="Gene3D" id="1.10.510.10">
    <property type="entry name" value="Transferase(Phosphotransferase) domain 1"/>
    <property type="match status" value="1"/>
</dbReference>
<dbReference type="HAMAP" id="MF_03181">
    <property type="entry name" value="PAN3"/>
    <property type="match status" value="1"/>
</dbReference>
<dbReference type="InterPro" id="IPR011009">
    <property type="entry name" value="Kinase-like_dom_sf"/>
</dbReference>
<dbReference type="InterPro" id="IPR030844">
    <property type="entry name" value="PAN3"/>
</dbReference>
<dbReference type="InterPro" id="IPR041332">
    <property type="entry name" value="Pan3_PK"/>
</dbReference>
<dbReference type="InterPro" id="IPR000719">
    <property type="entry name" value="Prot_kinase_dom"/>
</dbReference>
<dbReference type="InterPro" id="IPR000571">
    <property type="entry name" value="Znf_CCCH"/>
</dbReference>
<dbReference type="PANTHER" id="PTHR12272">
    <property type="entry name" value="DEADENYLATION COMPLEX SUBUNIT PAN3"/>
    <property type="match status" value="1"/>
</dbReference>
<dbReference type="PANTHER" id="PTHR12272:SF11">
    <property type="entry name" value="PAN2-PAN3 DEADENYLATION COMPLEX SUBUNIT PAN3"/>
    <property type="match status" value="1"/>
</dbReference>
<dbReference type="Pfam" id="PF18101">
    <property type="entry name" value="Pan3_PK"/>
    <property type="match status" value="1"/>
</dbReference>
<dbReference type="SUPFAM" id="SSF56112">
    <property type="entry name" value="Protein kinase-like (PK-like)"/>
    <property type="match status" value="1"/>
</dbReference>
<dbReference type="PROSITE" id="PS50011">
    <property type="entry name" value="PROTEIN_KINASE_DOM"/>
    <property type="match status" value="1"/>
</dbReference>
<dbReference type="PROSITE" id="PS50103">
    <property type="entry name" value="ZF_C3H1"/>
    <property type="match status" value="1"/>
</dbReference>
<gene>
    <name evidence="1" type="primary">pan3</name>
    <name type="ORF">An01g12360</name>
</gene>
<protein>
    <recommendedName>
        <fullName evidence="1">PAN2-PAN3 deadenylation complex subunit PAN3</fullName>
    </recommendedName>
    <alternativeName>
        <fullName evidence="1">PAB1P-dependent poly(A)-specific ribonuclease</fullName>
    </alternativeName>
    <alternativeName>
        <fullName evidence="1">Poly(A)-nuclease deadenylation complex subunit 3</fullName>
        <shortName evidence="1">PAN deadenylation complex subunit 3</shortName>
    </alternativeName>
</protein>